<proteinExistence type="inferred from homology"/>
<reference key="1">
    <citation type="journal article" date="2009" name="PLoS Genet.">
        <title>The complete genome and proteome of Laribacter hongkongensis reveal potential mechanisms for adaptations to different temperatures and habitats.</title>
        <authorList>
            <person name="Woo P.C.Y."/>
            <person name="Lau S.K.P."/>
            <person name="Tse H."/>
            <person name="Teng J.L.L."/>
            <person name="Curreem S.O."/>
            <person name="Tsang A.K.L."/>
            <person name="Fan R.Y.Y."/>
            <person name="Wong G.K.M."/>
            <person name="Huang Y."/>
            <person name="Loman N.J."/>
            <person name="Snyder L.A.S."/>
            <person name="Cai J.J."/>
            <person name="Huang J.-D."/>
            <person name="Mak W."/>
            <person name="Pallen M.J."/>
            <person name="Lok S."/>
            <person name="Yuen K.-Y."/>
        </authorList>
    </citation>
    <scope>NUCLEOTIDE SEQUENCE [LARGE SCALE GENOMIC DNA]</scope>
    <source>
        <strain>HLHK9</strain>
    </source>
</reference>
<accession>C1D8A6</accession>
<dbReference type="EC" id="5.4.99.62" evidence="1"/>
<dbReference type="EMBL" id="CP001154">
    <property type="protein sequence ID" value="ACO74696.1"/>
    <property type="molecule type" value="Genomic_DNA"/>
</dbReference>
<dbReference type="SMR" id="C1D8A6"/>
<dbReference type="STRING" id="557598.LHK_01711"/>
<dbReference type="KEGG" id="lhk:LHK_01711"/>
<dbReference type="eggNOG" id="COG1869">
    <property type="taxonomic scope" value="Bacteria"/>
</dbReference>
<dbReference type="HOGENOM" id="CLU_135498_0_0_4"/>
<dbReference type="UniPathway" id="UPA00916">
    <property type="reaction ID" value="UER00888"/>
</dbReference>
<dbReference type="Proteomes" id="UP000002010">
    <property type="component" value="Chromosome"/>
</dbReference>
<dbReference type="GO" id="GO:0005829">
    <property type="term" value="C:cytosol"/>
    <property type="evidence" value="ECO:0007669"/>
    <property type="project" value="TreeGrafter"/>
</dbReference>
<dbReference type="GO" id="GO:0062193">
    <property type="term" value="F:D-ribose pyranase activity"/>
    <property type="evidence" value="ECO:0007669"/>
    <property type="project" value="UniProtKB-EC"/>
</dbReference>
<dbReference type="GO" id="GO:0016872">
    <property type="term" value="F:intramolecular lyase activity"/>
    <property type="evidence" value="ECO:0007669"/>
    <property type="project" value="UniProtKB-UniRule"/>
</dbReference>
<dbReference type="GO" id="GO:0048029">
    <property type="term" value="F:monosaccharide binding"/>
    <property type="evidence" value="ECO:0007669"/>
    <property type="project" value="InterPro"/>
</dbReference>
<dbReference type="GO" id="GO:0019303">
    <property type="term" value="P:D-ribose catabolic process"/>
    <property type="evidence" value="ECO:0007669"/>
    <property type="project" value="UniProtKB-UniRule"/>
</dbReference>
<dbReference type="Gene3D" id="3.40.1650.10">
    <property type="entry name" value="RbsD-like domain"/>
    <property type="match status" value="1"/>
</dbReference>
<dbReference type="HAMAP" id="MF_01661">
    <property type="entry name" value="D_rib_pyranase"/>
    <property type="match status" value="1"/>
</dbReference>
<dbReference type="InterPro" id="IPR023064">
    <property type="entry name" value="D-ribose_pyranase"/>
</dbReference>
<dbReference type="InterPro" id="IPR023750">
    <property type="entry name" value="RbsD-like_sf"/>
</dbReference>
<dbReference type="InterPro" id="IPR007721">
    <property type="entry name" value="RbsD_FucU"/>
</dbReference>
<dbReference type="NCBIfam" id="NF008761">
    <property type="entry name" value="PRK11797.1"/>
    <property type="match status" value="1"/>
</dbReference>
<dbReference type="PANTHER" id="PTHR37831">
    <property type="entry name" value="D-RIBOSE PYRANASE"/>
    <property type="match status" value="1"/>
</dbReference>
<dbReference type="PANTHER" id="PTHR37831:SF1">
    <property type="entry name" value="D-RIBOSE PYRANASE"/>
    <property type="match status" value="1"/>
</dbReference>
<dbReference type="Pfam" id="PF05025">
    <property type="entry name" value="RbsD_FucU"/>
    <property type="match status" value="1"/>
</dbReference>
<dbReference type="SUPFAM" id="SSF102546">
    <property type="entry name" value="RbsD-like"/>
    <property type="match status" value="1"/>
</dbReference>
<protein>
    <recommendedName>
        <fullName evidence="1">D-ribose pyranase</fullName>
        <ecNumber evidence="1">5.4.99.62</ecNumber>
    </recommendedName>
</protein>
<organism>
    <name type="scientific">Laribacter hongkongensis (strain HLHK9)</name>
    <dbReference type="NCBI Taxonomy" id="557598"/>
    <lineage>
        <taxon>Bacteria</taxon>
        <taxon>Pseudomonadati</taxon>
        <taxon>Pseudomonadota</taxon>
        <taxon>Betaproteobacteria</taxon>
        <taxon>Neisseriales</taxon>
        <taxon>Aquaspirillaceae</taxon>
        <taxon>Laribacter</taxon>
    </lineage>
</organism>
<gene>
    <name evidence="1" type="primary">rbsD</name>
    <name type="ordered locus">LHK_01711</name>
</gene>
<evidence type="ECO:0000255" key="1">
    <source>
        <dbReference type="HAMAP-Rule" id="MF_01661"/>
    </source>
</evidence>
<feature type="chain" id="PRO_1000187156" description="D-ribose pyranase">
    <location>
        <begin position="1"/>
        <end position="131"/>
    </location>
</feature>
<feature type="active site" description="Proton donor" evidence="1">
    <location>
        <position position="20"/>
    </location>
</feature>
<feature type="binding site" evidence="1">
    <location>
        <position position="28"/>
    </location>
    <ligand>
        <name>substrate</name>
    </ligand>
</feature>
<feature type="binding site" evidence="1">
    <location>
        <position position="98"/>
    </location>
    <ligand>
        <name>substrate</name>
    </ligand>
</feature>
<feature type="binding site" evidence="1">
    <location>
        <begin position="120"/>
        <end position="122"/>
    </location>
    <ligand>
        <name>substrate</name>
    </ligand>
</feature>
<name>RBSD_LARHH</name>
<comment type="function">
    <text evidence="1">Catalyzes the interconversion of beta-pyran and beta-furan forms of D-ribose.</text>
</comment>
<comment type="catalytic activity">
    <reaction evidence="1">
        <text>beta-D-ribopyranose = beta-D-ribofuranose</text>
        <dbReference type="Rhea" id="RHEA:25432"/>
        <dbReference type="ChEBI" id="CHEBI:27476"/>
        <dbReference type="ChEBI" id="CHEBI:47002"/>
        <dbReference type="EC" id="5.4.99.62"/>
    </reaction>
</comment>
<comment type="pathway">
    <text evidence="1">Carbohydrate metabolism; D-ribose degradation; D-ribose 5-phosphate from beta-D-ribopyranose: step 1/2.</text>
</comment>
<comment type="subunit">
    <text evidence="1">Homodecamer.</text>
</comment>
<comment type="subcellular location">
    <subcellularLocation>
        <location evidence="1">Cytoplasm</location>
    </subcellularLocation>
</comment>
<comment type="similarity">
    <text evidence="1">Belongs to the RbsD / FucU family. RbsD subfamily.</text>
</comment>
<keyword id="KW-0119">Carbohydrate metabolism</keyword>
<keyword id="KW-0963">Cytoplasm</keyword>
<keyword id="KW-0413">Isomerase</keyword>
<keyword id="KW-1185">Reference proteome</keyword>
<sequence length="131" mass="14102">MKKNGILNAPLSRVIAELGHTDYIVIADCGLPIPPGVERIDLALKPGLPAFLDTLELVLADMQVERAVFANEISQHNPVIEHAATSMLDGKPIGHVPHAEFKQLSRGARAVIRTGEASPYANVILYSGVIF</sequence>